<keyword id="KW-0002">3D-structure</keyword>
<keyword id="KW-0903">Direct protein sequencing</keyword>
<keyword id="KW-1185">Reference proteome</keyword>
<keyword id="KW-0687">Ribonucleoprotein</keyword>
<keyword id="KW-0689">Ribosomal protein</keyword>
<proteinExistence type="evidence at protein level"/>
<comment type="subunit">
    <text evidence="1">Component of the small ribosomal subunit. Mature ribosomes consist of a small (40S) and a large (60S) subunit. The 40S subunit contains about 33 different proteins and 1 molecule of RNA (18S). The 60S subunit contains about 49 different proteins and 3 molecules of RNA (25S, 5.8S and 5S) (By similarity).</text>
</comment>
<comment type="similarity">
    <text evidence="2">Belongs to the universal ribosomal protein uL16 family.</text>
</comment>
<dbReference type="EMBL" id="AAFI02000109">
    <property type="protein sequence ID" value="EAL63318.2"/>
    <property type="molecule type" value="Genomic_DNA"/>
</dbReference>
<dbReference type="RefSeq" id="XP_636818.2">
    <property type="nucleotide sequence ID" value="XM_631726.2"/>
</dbReference>
<dbReference type="PDB" id="5AN9">
    <property type="method" value="EM"/>
    <property type="resolution" value="3.30 A"/>
    <property type="chains" value="F=1-217"/>
</dbReference>
<dbReference type="PDB" id="5ANB">
    <property type="method" value="EM"/>
    <property type="resolution" value="4.10 A"/>
    <property type="chains" value="F=1-217"/>
</dbReference>
<dbReference type="PDB" id="5ANC">
    <property type="method" value="EM"/>
    <property type="resolution" value="4.20 A"/>
    <property type="chains" value="F=1-217"/>
</dbReference>
<dbReference type="PDB" id="6QKL">
    <property type="method" value="EM"/>
    <property type="resolution" value="3.30 A"/>
    <property type="chains" value="F=1-217"/>
</dbReference>
<dbReference type="PDBsum" id="5AN9"/>
<dbReference type="PDBsum" id="5ANB"/>
<dbReference type="PDBsum" id="5ANC"/>
<dbReference type="PDBsum" id="6QKL"/>
<dbReference type="SMR" id="Q54J69"/>
<dbReference type="FunCoup" id="Q54J69">
    <property type="interactions" value="488"/>
</dbReference>
<dbReference type="STRING" id="44689.Q54J69"/>
<dbReference type="PaxDb" id="44689-DDB0231191"/>
<dbReference type="EnsemblProtists" id="EAL63318">
    <property type="protein sequence ID" value="EAL63318"/>
    <property type="gene ID" value="DDB_G0288273"/>
</dbReference>
<dbReference type="GeneID" id="8626535"/>
<dbReference type="KEGG" id="ddi:DDB_G0288273"/>
<dbReference type="dictyBase" id="DDB_G0288273">
    <property type="gene designation" value="rpl10"/>
</dbReference>
<dbReference type="VEuPathDB" id="AmoebaDB:DDB_G0288273"/>
<dbReference type="eggNOG" id="KOG0857">
    <property type="taxonomic scope" value="Eukaryota"/>
</dbReference>
<dbReference type="HOGENOM" id="CLU_084051_0_0_1"/>
<dbReference type="InParanoid" id="Q54J69"/>
<dbReference type="OMA" id="HHVIREN"/>
<dbReference type="PhylomeDB" id="Q54J69"/>
<dbReference type="Reactome" id="R-DDI-156827">
    <property type="pathway name" value="L13a-mediated translational silencing of Ceruloplasmin expression"/>
</dbReference>
<dbReference type="Reactome" id="R-DDI-1799339">
    <property type="pathway name" value="SRP-dependent cotranslational protein targeting to membrane"/>
</dbReference>
<dbReference type="Reactome" id="R-DDI-72689">
    <property type="pathway name" value="Formation of a pool of free 40S subunits"/>
</dbReference>
<dbReference type="Reactome" id="R-DDI-72706">
    <property type="pathway name" value="GTP hydrolysis and joining of the 60S ribosomal subunit"/>
</dbReference>
<dbReference type="Reactome" id="R-DDI-975956">
    <property type="pathway name" value="Nonsense Mediated Decay (NMD) independent of the Exon Junction Complex (EJC)"/>
</dbReference>
<dbReference type="Reactome" id="R-DDI-975957">
    <property type="pathway name" value="Nonsense Mediated Decay (NMD) enhanced by the Exon Junction Complex (EJC)"/>
</dbReference>
<dbReference type="EvolutionaryTrace" id="Q54J69"/>
<dbReference type="PRO" id="PR:Q54J69"/>
<dbReference type="Proteomes" id="UP000002195">
    <property type="component" value="Chromosome 5"/>
</dbReference>
<dbReference type="GO" id="GO:0022625">
    <property type="term" value="C:cytosolic large ribosomal subunit"/>
    <property type="evidence" value="ECO:0000318"/>
    <property type="project" value="GO_Central"/>
</dbReference>
<dbReference type="GO" id="GO:0005811">
    <property type="term" value="C:lipid droplet"/>
    <property type="evidence" value="ECO:0007005"/>
    <property type="project" value="dictyBase"/>
</dbReference>
<dbReference type="GO" id="GO:0003735">
    <property type="term" value="F:structural constituent of ribosome"/>
    <property type="evidence" value="ECO:0000318"/>
    <property type="project" value="GO_Central"/>
</dbReference>
<dbReference type="GO" id="GO:0006412">
    <property type="term" value="P:translation"/>
    <property type="evidence" value="ECO:0000318"/>
    <property type="project" value="GO_Central"/>
</dbReference>
<dbReference type="CDD" id="cd01433">
    <property type="entry name" value="Ribosomal_L16_L10e"/>
    <property type="match status" value="1"/>
</dbReference>
<dbReference type="FunFam" id="3.90.1170.10:FF:000002">
    <property type="entry name" value="60S ribosomal protein L10"/>
    <property type="match status" value="1"/>
</dbReference>
<dbReference type="FunFam" id="3.30.60.300:FF:000003">
    <property type="entry name" value="60S ribosomal protein L10, putative"/>
    <property type="match status" value="1"/>
</dbReference>
<dbReference type="Gene3D" id="3.30.60.300">
    <property type="match status" value="1"/>
</dbReference>
<dbReference type="Gene3D" id="3.90.1170.10">
    <property type="entry name" value="Ribosomal protein L10e/L16"/>
    <property type="match status" value="1"/>
</dbReference>
<dbReference type="InterPro" id="IPR047873">
    <property type="entry name" value="Ribosomal_uL16"/>
</dbReference>
<dbReference type="InterPro" id="IPR018255">
    <property type="entry name" value="Ribosomal_uL16_CS_euk_arc"/>
</dbReference>
<dbReference type="InterPro" id="IPR016180">
    <property type="entry name" value="Ribosomal_uL16_dom"/>
</dbReference>
<dbReference type="InterPro" id="IPR001197">
    <property type="entry name" value="Ribosomal_uL16_euk_arch"/>
</dbReference>
<dbReference type="InterPro" id="IPR036920">
    <property type="entry name" value="Ribosomal_uL16_sf"/>
</dbReference>
<dbReference type="NCBIfam" id="NF003239">
    <property type="entry name" value="PRK04199.1-4"/>
    <property type="match status" value="1"/>
</dbReference>
<dbReference type="NCBIfam" id="TIGR00279">
    <property type="entry name" value="uL16_euk_arch"/>
    <property type="match status" value="1"/>
</dbReference>
<dbReference type="PANTHER" id="PTHR11726">
    <property type="entry name" value="60S RIBOSOMAL PROTEIN L10"/>
    <property type="match status" value="1"/>
</dbReference>
<dbReference type="Pfam" id="PF00252">
    <property type="entry name" value="Ribosomal_L16"/>
    <property type="match status" value="1"/>
</dbReference>
<dbReference type="PIRSF" id="PIRSF005590">
    <property type="entry name" value="Ribosomal_L10"/>
    <property type="match status" value="1"/>
</dbReference>
<dbReference type="SUPFAM" id="SSF54686">
    <property type="entry name" value="Ribosomal protein L16p/L10e"/>
    <property type="match status" value="1"/>
</dbReference>
<dbReference type="PROSITE" id="PS01257">
    <property type="entry name" value="RIBOSOMAL_L10E"/>
    <property type="match status" value="1"/>
</dbReference>
<sequence>MGRRPARCYRYCKNKPYIKSRYCRGVPDAKIRIFDLGRKKASTDEFPLCVHLISLEKEQLSSEAIEAGRISCNKYISKTGGKDSFHMRVRVHPWHVLRINKMLSCAGADRLQTGMRGAFGKPMGTVARVNIGQIIFSIRTRDNMLANVVEALRRSSYKFPGRQKIVVSKKWGFTAYNREAYQKLKADGRLMNDGANVKVITNHGTLAQYAKDIAAAN</sequence>
<gene>
    <name type="primary">rpl10</name>
    <name type="synonym">rpl10e</name>
    <name type="ORF">DDB_G0288273</name>
</gene>
<protein>
    <recommendedName>
        <fullName evidence="2">Large ribosomal subunit protein uL16</fullName>
    </recommendedName>
    <alternativeName>
        <fullName>60S ribosomal protein L10</fullName>
    </alternativeName>
</protein>
<accession>Q54J69</accession>
<reference key="1">
    <citation type="journal article" date="2005" name="Nature">
        <title>The genome of the social amoeba Dictyostelium discoideum.</title>
        <authorList>
            <person name="Eichinger L."/>
            <person name="Pachebat J.A."/>
            <person name="Gloeckner G."/>
            <person name="Rajandream M.A."/>
            <person name="Sucgang R."/>
            <person name="Berriman M."/>
            <person name="Song J."/>
            <person name="Olsen R."/>
            <person name="Szafranski K."/>
            <person name="Xu Q."/>
            <person name="Tunggal B."/>
            <person name="Kummerfeld S."/>
            <person name="Madera M."/>
            <person name="Konfortov B.A."/>
            <person name="Rivero F."/>
            <person name="Bankier A.T."/>
            <person name="Lehmann R."/>
            <person name="Hamlin N."/>
            <person name="Davies R."/>
            <person name="Gaudet P."/>
            <person name="Fey P."/>
            <person name="Pilcher K."/>
            <person name="Chen G."/>
            <person name="Saunders D."/>
            <person name="Sodergren E.J."/>
            <person name="Davis P."/>
            <person name="Kerhornou A."/>
            <person name="Nie X."/>
            <person name="Hall N."/>
            <person name="Anjard C."/>
            <person name="Hemphill L."/>
            <person name="Bason N."/>
            <person name="Farbrother P."/>
            <person name="Desany B."/>
            <person name="Just E."/>
            <person name="Morio T."/>
            <person name="Rost R."/>
            <person name="Churcher C.M."/>
            <person name="Cooper J."/>
            <person name="Haydock S."/>
            <person name="van Driessche N."/>
            <person name="Cronin A."/>
            <person name="Goodhead I."/>
            <person name="Muzny D.M."/>
            <person name="Mourier T."/>
            <person name="Pain A."/>
            <person name="Lu M."/>
            <person name="Harper D."/>
            <person name="Lindsay R."/>
            <person name="Hauser H."/>
            <person name="James K.D."/>
            <person name="Quiles M."/>
            <person name="Madan Babu M."/>
            <person name="Saito T."/>
            <person name="Buchrieser C."/>
            <person name="Wardroper A."/>
            <person name="Felder M."/>
            <person name="Thangavelu M."/>
            <person name="Johnson D."/>
            <person name="Knights A."/>
            <person name="Loulseged H."/>
            <person name="Mungall K.L."/>
            <person name="Oliver K."/>
            <person name="Price C."/>
            <person name="Quail M.A."/>
            <person name="Urushihara H."/>
            <person name="Hernandez J."/>
            <person name="Rabbinowitsch E."/>
            <person name="Steffen D."/>
            <person name="Sanders M."/>
            <person name="Ma J."/>
            <person name="Kohara Y."/>
            <person name="Sharp S."/>
            <person name="Simmonds M.N."/>
            <person name="Spiegler S."/>
            <person name="Tivey A."/>
            <person name="Sugano S."/>
            <person name="White B."/>
            <person name="Walker D."/>
            <person name="Woodward J.R."/>
            <person name="Winckler T."/>
            <person name="Tanaka Y."/>
            <person name="Shaulsky G."/>
            <person name="Schleicher M."/>
            <person name="Weinstock G.M."/>
            <person name="Rosenthal A."/>
            <person name="Cox E.C."/>
            <person name="Chisholm R.L."/>
            <person name="Gibbs R.A."/>
            <person name="Loomis W.F."/>
            <person name="Platzer M."/>
            <person name="Kay R.R."/>
            <person name="Williams J.G."/>
            <person name="Dear P.H."/>
            <person name="Noegel A.A."/>
            <person name="Barrell B.G."/>
            <person name="Kuspa A."/>
        </authorList>
    </citation>
    <scope>NUCLEOTIDE SEQUENCE [LARGE SCALE GENOMIC DNA]</scope>
    <source>
        <strain>AX4</strain>
    </source>
</reference>
<reference key="2">
    <citation type="submission" date="2010-01" db="UniProtKB">
        <authorList>
            <person name="Bienvenut W.V."/>
            <person name="Veltman D.M."/>
            <person name="Insall R.H."/>
        </authorList>
    </citation>
    <scope>PROTEIN SEQUENCE OF 58-69; 129-139; 142-162 AND 199-211</scope>
    <scope>IDENTIFICATION BY MASS SPECTROMETRY</scope>
</reference>
<feature type="chain" id="PRO_0000311827" description="Large ribosomal subunit protein uL16">
    <location>
        <begin position="1"/>
        <end position="217"/>
    </location>
</feature>
<feature type="helix" evidence="3">
    <location>
        <begin position="6"/>
        <end position="9"/>
    </location>
</feature>
<feature type="strand" evidence="3">
    <location>
        <begin position="18"/>
        <end position="20"/>
    </location>
</feature>
<feature type="strand" evidence="3">
    <location>
        <begin position="39"/>
        <end position="41"/>
    </location>
</feature>
<feature type="turn" evidence="3">
    <location>
        <begin position="43"/>
        <end position="45"/>
    </location>
</feature>
<feature type="strand" evidence="3">
    <location>
        <begin position="48"/>
        <end position="56"/>
    </location>
</feature>
<feature type="strand" evidence="3">
    <location>
        <begin position="59"/>
        <end position="61"/>
    </location>
</feature>
<feature type="helix" evidence="3">
    <location>
        <begin position="62"/>
        <end position="73"/>
    </location>
</feature>
<feature type="strand" evidence="3">
    <location>
        <begin position="75"/>
        <end position="80"/>
    </location>
</feature>
<feature type="strand" evidence="3">
    <location>
        <begin position="95"/>
        <end position="99"/>
    </location>
</feature>
<feature type="strand" evidence="3">
    <location>
        <begin position="105"/>
        <end position="107"/>
    </location>
</feature>
<feature type="strand" evidence="3">
    <location>
        <begin position="110"/>
        <end position="113"/>
    </location>
</feature>
<feature type="strand" evidence="3">
    <location>
        <begin position="121"/>
        <end position="128"/>
    </location>
</feature>
<feature type="strand" evidence="3">
    <location>
        <begin position="133"/>
        <end position="140"/>
    </location>
</feature>
<feature type="helix" evidence="3">
    <location>
        <begin position="147"/>
        <end position="158"/>
    </location>
</feature>
<feature type="strand" evidence="3">
    <location>
        <begin position="159"/>
        <end position="161"/>
    </location>
</feature>
<feature type="strand" evidence="3">
    <location>
        <begin position="163"/>
        <end position="167"/>
    </location>
</feature>
<feature type="strand" evidence="3">
    <location>
        <begin position="172"/>
        <end position="175"/>
    </location>
</feature>
<feature type="helix" evidence="3">
    <location>
        <begin position="179"/>
        <end position="187"/>
    </location>
</feature>
<feature type="strand" evidence="3">
    <location>
        <begin position="194"/>
        <end position="197"/>
    </location>
</feature>
<feature type="strand" evidence="3">
    <location>
        <begin position="202"/>
        <end position="204"/>
    </location>
</feature>
<feature type="turn" evidence="3">
    <location>
        <begin position="212"/>
        <end position="215"/>
    </location>
</feature>
<name>RL10_DICDI</name>
<organism>
    <name type="scientific">Dictyostelium discoideum</name>
    <name type="common">Social amoeba</name>
    <dbReference type="NCBI Taxonomy" id="44689"/>
    <lineage>
        <taxon>Eukaryota</taxon>
        <taxon>Amoebozoa</taxon>
        <taxon>Evosea</taxon>
        <taxon>Eumycetozoa</taxon>
        <taxon>Dictyostelia</taxon>
        <taxon>Dictyosteliales</taxon>
        <taxon>Dictyosteliaceae</taxon>
        <taxon>Dictyostelium</taxon>
    </lineage>
</organism>
<evidence type="ECO:0000250" key="1"/>
<evidence type="ECO:0000305" key="2"/>
<evidence type="ECO:0007829" key="3">
    <source>
        <dbReference type="PDB" id="5AN9"/>
    </source>
</evidence>